<keyword id="KW-0067">ATP-binding</keyword>
<keyword id="KW-0963">Cytoplasm</keyword>
<keyword id="KW-1015">Disulfide bond</keyword>
<keyword id="KW-0547">Nucleotide-binding</keyword>
<keyword id="KW-1185">Reference proteome</keyword>
<keyword id="KW-0694">RNA-binding</keyword>
<keyword id="KW-0808">Transferase</keyword>
<keyword id="KW-0819">tRNA processing</keyword>
<keyword id="KW-0820">tRNA-binding</keyword>
<protein>
    <recommendedName>
        <fullName evidence="1">tRNA-specific 2-thiouridylase MnmA</fullName>
        <ecNumber evidence="1">2.8.1.13</ecNumber>
    </recommendedName>
</protein>
<accession>A4Z082</accession>
<evidence type="ECO:0000255" key="1">
    <source>
        <dbReference type="HAMAP-Rule" id="MF_00144"/>
    </source>
</evidence>
<name>MNMA_BRASO</name>
<organism>
    <name type="scientific">Bradyrhizobium sp. (strain ORS 278)</name>
    <dbReference type="NCBI Taxonomy" id="114615"/>
    <lineage>
        <taxon>Bacteria</taxon>
        <taxon>Pseudomonadati</taxon>
        <taxon>Pseudomonadota</taxon>
        <taxon>Alphaproteobacteria</taxon>
        <taxon>Hyphomicrobiales</taxon>
        <taxon>Nitrobacteraceae</taxon>
        <taxon>Bradyrhizobium</taxon>
    </lineage>
</organism>
<reference key="1">
    <citation type="journal article" date="2007" name="Science">
        <title>Legumes symbioses: absence of nod genes in photosynthetic bradyrhizobia.</title>
        <authorList>
            <person name="Giraud E."/>
            <person name="Moulin L."/>
            <person name="Vallenet D."/>
            <person name="Barbe V."/>
            <person name="Cytryn E."/>
            <person name="Avarre J.-C."/>
            <person name="Jaubert M."/>
            <person name="Simon D."/>
            <person name="Cartieaux F."/>
            <person name="Prin Y."/>
            <person name="Bena G."/>
            <person name="Hannibal L."/>
            <person name="Fardoux J."/>
            <person name="Kojadinovic M."/>
            <person name="Vuillet L."/>
            <person name="Lajus A."/>
            <person name="Cruveiller S."/>
            <person name="Rouy Z."/>
            <person name="Mangenot S."/>
            <person name="Segurens B."/>
            <person name="Dossat C."/>
            <person name="Franck W.L."/>
            <person name="Chang W.-S."/>
            <person name="Saunders E."/>
            <person name="Bruce D."/>
            <person name="Richardson P."/>
            <person name="Normand P."/>
            <person name="Dreyfus B."/>
            <person name="Pignol D."/>
            <person name="Stacey G."/>
            <person name="Emerich D."/>
            <person name="Vermeglio A."/>
            <person name="Medigue C."/>
            <person name="Sadowsky M."/>
        </authorList>
    </citation>
    <scope>NUCLEOTIDE SEQUENCE [LARGE SCALE GENOMIC DNA]</scope>
    <source>
        <strain>ORS 278</strain>
    </source>
</reference>
<proteinExistence type="inferred from homology"/>
<comment type="function">
    <text evidence="1">Catalyzes the 2-thiolation of uridine at the wobble position (U34) of tRNA, leading to the formation of s(2)U34.</text>
</comment>
<comment type="catalytic activity">
    <reaction evidence="1">
        <text>S-sulfanyl-L-cysteinyl-[protein] + uridine(34) in tRNA + AH2 + ATP = 2-thiouridine(34) in tRNA + L-cysteinyl-[protein] + A + AMP + diphosphate + H(+)</text>
        <dbReference type="Rhea" id="RHEA:47032"/>
        <dbReference type="Rhea" id="RHEA-COMP:10131"/>
        <dbReference type="Rhea" id="RHEA-COMP:11726"/>
        <dbReference type="Rhea" id="RHEA-COMP:11727"/>
        <dbReference type="Rhea" id="RHEA-COMP:11728"/>
        <dbReference type="ChEBI" id="CHEBI:13193"/>
        <dbReference type="ChEBI" id="CHEBI:15378"/>
        <dbReference type="ChEBI" id="CHEBI:17499"/>
        <dbReference type="ChEBI" id="CHEBI:29950"/>
        <dbReference type="ChEBI" id="CHEBI:30616"/>
        <dbReference type="ChEBI" id="CHEBI:33019"/>
        <dbReference type="ChEBI" id="CHEBI:61963"/>
        <dbReference type="ChEBI" id="CHEBI:65315"/>
        <dbReference type="ChEBI" id="CHEBI:87170"/>
        <dbReference type="ChEBI" id="CHEBI:456215"/>
        <dbReference type="EC" id="2.8.1.13"/>
    </reaction>
</comment>
<comment type="subcellular location">
    <subcellularLocation>
        <location evidence="1">Cytoplasm</location>
    </subcellularLocation>
</comment>
<comment type="similarity">
    <text evidence="1">Belongs to the MnmA/TRMU family.</text>
</comment>
<gene>
    <name evidence="1" type="primary">mnmA</name>
    <name type="ordered locus">BRADO5894</name>
</gene>
<dbReference type="EC" id="2.8.1.13" evidence="1"/>
<dbReference type="EMBL" id="CU234118">
    <property type="protein sequence ID" value="CAL79558.1"/>
    <property type="molecule type" value="Genomic_DNA"/>
</dbReference>
<dbReference type="RefSeq" id="WP_012029458.1">
    <property type="nucleotide sequence ID" value="NC_009445.1"/>
</dbReference>
<dbReference type="SMR" id="A4Z082"/>
<dbReference type="STRING" id="114615.BRADO5894"/>
<dbReference type="KEGG" id="bra:BRADO5894"/>
<dbReference type="eggNOG" id="COG0482">
    <property type="taxonomic scope" value="Bacteria"/>
</dbReference>
<dbReference type="HOGENOM" id="CLU_035188_0_1_5"/>
<dbReference type="OrthoDB" id="9800696at2"/>
<dbReference type="Proteomes" id="UP000001994">
    <property type="component" value="Chromosome"/>
</dbReference>
<dbReference type="GO" id="GO:0005737">
    <property type="term" value="C:cytoplasm"/>
    <property type="evidence" value="ECO:0007669"/>
    <property type="project" value="UniProtKB-SubCell"/>
</dbReference>
<dbReference type="GO" id="GO:0005524">
    <property type="term" value="F:ATP binding"/>
    <property type="evidence" value="ECO:0007669"/>
    <property type="project" value="UniProtKB-KW"/>
</dbReference>
<dbReference type="GO" id="GO:0000049">
    <property type="term" value="F:tRNA binding"/>
    <property type="evidence" value="ECO:0007669"/>
    <property type="project" value="UniProtKB-KW"/>
</dbReference>
<dbReference type="GO" id="GO:0103016">
    <property type="term" value="F:tRNA-uridine 2-sulfurtransferase activity"/>
    <property type="evidence" value="ECO:0007669"/>
    <property type="project" value="UniProtKB-EC"/>
</dbReference>
<dbReference type="GO" id="GO:0002143">
    <property type="term" value="P:tRNA wobble position uridine thiolation"/>
    <property type="evidence" value="ECO:0007669"/>
    <property type="project" value="TreeGrafter"/>
</dbReference>
<dbReference type="CDD" id="cd01998">
    <property type="entry name" value="MnmA_TRMU-like"/>
    <property type="match status" value="1"/>
</dbReference>
<dbReference type="FunFam" id="2.30.30.280:FF:000001">
    <property type="entry name" value="tRNA-specific 2-thiouridylase MnmA"/>
    <property type="match status" value="1"/>
</dbReference>
<dbReference type="FunFam" id="3.40.50.620:FF:000115">
    <property type="entry name" value="tRNA-specific 2-thiouridylase MnmA"/>
    <property type="match status" value="1"/>
</dbReference>
<dbReference type="Gene3D" id="2.30.30.280">
    <property type="entry name" value="Adenine nucleotide alpha hydrolases-like domains"/>
    <property type="match status" value="1"/>
</dbReference>
<dbReference type="Gene3D" id="3.40.50.620">
    <property type="entry name" value="HUPs"/>
    <property type="match status" value="1"/>
</dbReference>
<dbReference type="Gene3D" id="2.40.30.10">
    <property type="entry name" value="Translation factors"/>
    <property type="match status" value="1"/>
</dbReference>
<dbReference type="HAMAP" id="MF_00144">
    <property type="entry name" value="tRNA_thiouridyl_MnmA"/>
    <property type="match status" value="1"/>
</dbReference>
<dbReference type="InterPro" id="IPR004506">
    <property type="entry name" value="MnmA-like"/>
</dbReference>
<dbReference type="InterPro" id="IPR046885">
    <property type="entry name" value="MnmA-like_C"/>
</dbReference>
<dbReference type="InterPro" id="IPR046884">
    <property type="entry name" value="MnmA-like_central"/>
</dbReference>
<dbReference type="InterPro" id="IPR023382">
    <property type="entry name" value="MnmA-like_central_sf"/>
</dbReference>
<dbReference type="InterPro" id="IPR014729">
    <property type="entry name" value="Rossmann-like_a/b/a_fold"/>
</dbReference>
<dbReference type="NCBIfam" id="NF001138">
    <property type="entry name" value="PRK00143.1"/>
    <property type="match status" value="1"/>
</dbReference>
<dbReference type="NCBIfam" id="TIGR00420">
    <property type="entry name" value="trmU"/>
    <property type="match status" value="1"/>
</dbReference>
<dbReference type="PANTHER" id="PTHR11933:SF5">
    <property type="entry name" value="MITOCHONDRIAL TRNA-SPECIFIC 2-THIOURIDYLASE 1"/>
    <property type="match status" value="1"/>
</dbReference>
<dbReference type="PANTHER" id="PTHR11933">
    <property type="entry name" value="TRNA 5-METHYLAMINOMETHYL-2-THIOURIDYLATE -METHYLTRANSFERASE"/>
    <property type="match status" value="1"/>
</dbReference>
<dbReference type="Pfam" id="PF03054">
    <property type="entry name" value="tRNA_Me_trans"/>
    <property type="match status" value="1"/>
</dbReference>
<dbReference type="Pfam" id="PF20258">
    <property type="entry name" value="tRNA_Me_trans_C"/>
    <property type="match status" value="1"/>
</dbReference>
<dbReference type="Pfam" id="PF20259">
    <property type="entry name" value="tRNA_Me_trans_M"/>
    <property type="match status" value="1"/>
</dbReference>
<dbReference type="SUPFAM" id="SSF52402">
    <property type="entry name" value="Adenine nucleotide alpha hydrolases-like"/>
    <property type="match status" value="1"/>
</dbReference>
<sequence>MLNSLDLEGRPEDTRVVVAMSGGVDSSVTAALLKSQGYDVVGITLQLYDHGAATHRKGACCAGQDIHDARNVAERLGIPHYVLDYEDRFRESVIDNFAASYASGETPVPCIECNRAIKFGDLLKTARELGASVLATGHYVASRRLPDGSRALTCAADADRDQSYFLFATTREQLDYLRFPLGDMTKPEVRELARRFELEVADKHDSQDICFVPTGRYTDIIGKLRPNAMEPGEIVDLNGRVLGAHQGIANYTIGQRKGLGIAAGAPLYVVKLDVTTRRVVVGPREALRTHRITLREVNWIGDGALDAAVRDGLELFVRVRSTRAPQPAWLRGADGSYEVELVGGEEGVSPGQACVFYDAASGRARVLGGGFIQSAVAESSATAGLVRPQRVAEPVRG</sequence>
<feature type="chain" id="PRO_0000349547" description="tRNA-specific 2-thiouridylase MnmA">
    <location>
        <begin position="1"/>
        <end position="397"/>
    </location>
</feature>
<feature type="region of interest" description="Interaction with tRNA" evidence="1">
    <location>
        <begin position="160"/>
        <end position="162"/>
    </location>
</feature>
<feature type="active site" description="Nucleophile" evidence="1">
    <location>
        <position position="113"/>
    </location>
</feature>
<feature type="active site" description="Cysteine persulfide intermediate" evidence="1">
    <location>
        <position position="210"/>
    </location>
</feature>
<feature type="binding site" evidence="1">
    <location>
        <begin position="19"/>
        <end position="26"/>
    </location>
    <ligand>
        <name>ATP</name>
        <dbReference type="ChEBI" id="CHEBI:30616"/>
    </ligand>
</feature>
<feature type="binding site" evidence="1">
    <location>
        <position position="45"/>
    </location>
    <ligand>
        <name>ATP</name>
        <dbReference type="ChEBI" id="CHEBI:30616"/>
    </ligand>
</feature>
<feature type="binding site" evidence="1">
    <location>
        <position position="137"/>
    </location>
    <ligand>
        <name>ATP</name>
        <dbReference type="ChEBI" id="CHEBI:30616"/>
    </ligand>
</feature>
<feature type="site" description="Interaction with tRNA" evidence="1">
    <location>
        <position position="138"/>
    </location>
</feature>
<feature type="site" description="Interaction with tRNA" evidence="1">
    <location>
        <position position="352"/>
    </location>
</feature>
<feature type="disulfide bond" description="Alternate" evidence="1">
    <location>
        <begin position="113"/>
        <end position="210"/>
    </location>
</feature>